<proteinExistence type="inferred from homology"/>
<feature type="chain" id="PRO_0000268234" description="Fe/S biogenesis protein NfuA">
    <location>
        <begin position="1"/>
        <end position="194"/>
    </location>
</feature>
<feature type="binding site" evidence="1">
    <location>
        <position position="151"/>
    </location>
    <ligand>
        <name>[4Fe-4S] cluster</name>
        <dbReference type="ChEBI" id="CHEBI:49883"/>
    </ligand>
</feature>
<feature type="binding site" evidence="1">
    <location>
        <position position="154"/>
    </location>
    <ligand>
        <name>[4Fe-4S] cluster</name>
        <dbReference type="ChEBI" id="CHEBI:49883"/>
    </ligand>
</feature>
<reference key="1">
    <citation type="journal article" date="2004" name="Nat. Biotechnol.">
        <title>The genome sequence of the capnophilic rumen bacterium Mannheimia succiniciproducens.</title>
        <authorList>
            <person name="Hong S.H."/>
            <person name="Kim J.S."/>
            <person name="Lee S.Y."/>
            <person name="In Y.H."/>
            <person name="Choi S.S."/>
            <person name="Rih J.-K."/>
            <person name="Kim C.H."/>
            <person name="Jeong H."/>
            <person name="Hur C.G."/>
            <person name="Kim J.J."/>
        </authorList>
    </citation>
    <scope>NUCLEOTIDE SEQUENCE [LARGE SCALE GENOMIC DNA]</scope>
    <source>
        <strain>KCTC 0769BP / MBEL55E</strain>
    </source>
</reference>
<accession>Q65QC1</accession>
<protein>
    <recommendedName>
        <fullName evidence="1">Fe/S biogenesis protein NfuA</fullName>
    </recommendedName>
</protein>
<dbReference type="EMBL" id="AE016827">
    <property type="protein sequence ID" value="AAU38839.1"/>
    <property type="molecule type" value="Genomic_DNA"/>
</dbReference>
<dbReference type="RefSeq" id="WP_011201383.1">
    <property type="nucleotide sequence ID" value="NC_006300.1"/>
</dbReference>
<dbReference type="SMR" id="Q65QC1"/>
<dbReference type="STRING" id="221988.MS2232"/>
<dbReference type="KEGG" id="msu:MS2232"/>
<dbReference type="eggNOG" id="COG0316">
    <property type="taxonomic scope" value="Bacteria"/>
</dbReference>
<dbReference type="eggNOG" id="COG0694">
    <property type="taxonomic scope" value="Bacteria"/>
</dbReference>
<dbReference type="HOGENOM" id="CLU_094569_0_0_6"/>
<dbReference type="OrthoDB" id="9785450at2"/>
<dbReference type="Proteomes" id="UP000000607">
    <property type="component" value="Chromosome"/>
</dbReference>
<dbReference type="GO" id="GO:0051539">
    <property type="term" value="F:4 iron, 4 sulfur cluster binding"/>
    <property type="evidence" value="ECO:0007669"/>
    <property type="project" value="UniProtKB-UniRule"/>
</dbReference>
<dbReference type="GO" id="GO:0005506">
    <property type="term" value="F:iron ion binding"/>
    <property type="evidence" value="ECO:0007669"/>
    <property type="project" value="InterPro"/>
</dbReference>
<dbReference type="GO" id="GO:0016226">
    <property type="term" value="P:iron-sulfur cluster assembly"/>
    <property type="evidence" value="ECO:0007669"/>
    <property type="project" value="UniProtKB-UniRule"/>
</dbReference>
<dbReference type="GO" id="GO:0051604">
    <property type="term" value="P:protein maturation"/>
    <property type="evidence" value="ECO:0007669"/>
    <property type="project" value="UniProtKB-UniRule"/>
</dbReference>
<dbReference type="Gene3D" id="3.30.300.130">
    <property type="entry name" value="Fe-S cluster assembly (FSCA)"/>
    <property type="match status" value="1"/>
</dbReference>
<dbReference type="Gene3D" id="2.60.300.12">
    <property type="entry name" value="HesB-like domain"/>
    <property type="match status" value="1"/>
</dbReference>
<dbReference type="HAMAP" id="MF_01637">
    <property type="entry name" value="Fe_S_biogen_NfuA"/>
    <property type="match status" value="1"/>
</dbReference>
<dbReference type="InterPro" id="IPR017726">
    <property type="entry name" value="Fe/S_biogenesis_protein_NfuA"/>
</dbReference>
<dbReference type="InterPro" id="IPR000361">
    <property type="entry name" value="FeS_biogenesis"/>
</dbReference>
<dbReference type="InterPro" id="IPR034904">
    <property type="entry name" value="FSCA_dom_sf"/>
</dbReference>
<dbReference type="InterPro" id="IPR035903">
    <property type="entry name" value="HesB-like_dom_sf"/>
</dbReference>
<dbReference type="InterPro" id="IPR001075">
    <property type="entry name" value="NIF_FeS_clus_asmbl_NifU_C"/>
</dbReference>
<dbReference type="NCBIfam" id="NF008392">
    <property type="entry name" value="PRK11190.1"/>
    <property type="match status" value="1"/>
</dbReference>
<dbReference type="NCBIfam" id="TIGR03341">
    <property type="entry name" value="YhgI_GntY"/>
    <property type="match status" value="1"/>
</dbReference>
<dbReference type="PANTHER" id="PTHR11178:SF51">
    <property type="entry name" value="FE_S BIOGENESIS PROTEIN NFUA"/>
    <property type="match status" value="1"/>
</dbReference>
<dbReference type="PANTHER" id="PTHR11178">
    <property type="entry name" value="IRON-SULFUR CLUSTER SCAFFOLD PROTEIN NFU-RELATED"/>
    <property type="match status" value="1"/>
</dbReference>
<dbReference type="Pfam" id="PF01521">
    <property type="entry name" value="Fe-S_biosyn"/>
    <property type="match status" value="1"/>
</dbReference>
<dbReference type="Pfam" id="PF01106">
    <property type="entry name" value="NifU"/>
    <property type="match status" value="1"/>
</dbReference>
<dbReference type="SUPFAM" id="SSF117916">
    <property type="entry name" value="Fe-S cluster assembly (FSCA) domain-like"/>
    <property type="match status" value="1"/>
</dbReference>
<dbReference type="SUPFAM" id="SSF89360">
    <property type="entry name" value="HesB-like domain"/>
    <property type="match status" value="1"/>
</dbReference>
<gene>
    <name evidence="1" type="primary">nfuA</name>
    <name type="ordered locus">MS2232</name>
</gene>
<keyword id="KW-0004">4Fe-4S</keyword>
<keyword id="KW-0408">Iron</keyword>
<keyword id="KW-0411">Iron-sulfur</keyword>
<keyword id="KW-0479">Metal-binding</keyword>
<organism>
    <name type="scientific">Mannheimia succiniciproducens (strain KCTC 0769BP / MBEL55E)</name>
    <dbReference type="NCBI Taxonomy" id="221988"/>
    <lineage>
        <taxon>Bacteria</taxon>
        <taxon>Pseudomonadati</taxon>
        <taxon>Pseudomonadota</taxon>
        <taxon>Gammaproteobacteria</taxon>
        <taxon>Pasteurellales</taxon>
        <taxon>Pasteurellaceae</taxon>
        <taxon>Basfia</taxon>
    </lineage>
</organism>
<sequence length="194" mass="21345">MQQIQISDAAQGHFRKLLDQQEEGTNIRIFVVNPGTPNAECGVSYCPPNAVEATDTEMKYATFSAFVDEVSLPFLEDAEIDYVTEELGTQLTLKAPNAKMRKVADDAPLIERVDYVIQTQINPQLASHGGRITLVEITDEGYAILQFGGGCNGCSMVDVTLKDGVEKQLVELFAGELKGAKDITEHQRGEHSYY</sequence>
<comment type="function">
    <text evidence="1">Involved in iron-sulfur cluster biogenesis. Binds a 4Fe-4S cluster, can transfer this cluster to apoproteins, and thereby intervenes in the maturation of Fe/S proteins. Could also act as a scaffold/chaperone for damaged Fe/S proteins.</text>
</comment>
<comment type="cofactor">
    <cofactor evidence="1">
        <name>[4Fe-4S] cluster</name>
        <dbReference type="ChEBI" id="CHEBI:49883"/>
    </cofactor>
    <text evidence="1">Binds 1 [4Fe-4S] cluster per subunit. The cluster is presumably bound at the interface of two monomers.</text>
</comment>
<comment type="subunit">
    <text evidence="1">Homodimer.</text>
</comment>
<comment type="similarity">
    <text evidence="1">Belongs to the NfuA family.</text>
</comment>
<evidence type="ECO:0000255" key="1">
    <source>
        <dbReference type="HAMAP-Rule" id="MF_01637"/>
    </source>
</evidence>
<name>NFUA_MANSM</name>